<name>DTXS4_METRA</name>
<comment type="function">
    <text evidence="2">L-aspartate decarboxylase; part of the gene cluster that mediates the biosynthesis of destruxins, insecticidal cyclic hexadepsipeptides which induce flaccid paralysis and visceral muscle contraction in insects through targeting the calcium channels and vacuolar-type ATPases (PubMed:22232661). The aldo-keto reductase dtxS3 converts alpha-ketoisocaproic acid from deaminated leucine into alpha-hydroxyisocaproic acid (HIC), which is the first substrate for destruxin assembly by dtxS1 (PubMed:22232661). L-aspartate decarboxylase dtxS4 converts aspartic acid into beta-alanine, the last substrate for the destruxin assembly line performed by dtxS1 (PubMed:22232661). The nonribosomal peptide synthetase dtxS1 synthesizes destruxins B and B2, whereas the cytochrome P450 monooxygenase dtxS2 is required to convert destruxin B into other destruxin derivatives, including destructins C, D, A and E (PubMed:22232661). Destruxin E-diol (ED) is further produced in a non-enzymatic manner from destruxin E (PubMed:22232661). Destruxins play an important role in virulence and escape from insect host immune defenses (PubMed:22232661).</text>
</comment>
<comment type="catalytic activity">
    <reaction evidence="5">
        <text>L-aspartate + H(+) = beta-alanine + CO2</text>
        <dbReference type="Rhea" id="RHEA:19497"/>
        <dbReference type="ChEBI" id="CHEBI:15378"/>
        <dbReference type="ChEBI" id="CHEBI:16526"/>
        <dbReference type="ChEBI" id="CHEBI:29991"/>
        <dbReference type="ChEBI" id="CHEBI:57966"/>
        <dbReference type="EC" id="4.1.1.11"/>
    </reaction>
</comment>
<comment type="cofactor">
    <cofactor evidence="1">
        <name>pyridoxal 5'-phosphate</name>
        <dbReference type="ChEBI" id="CHEBI:597326"/>
    </cofactor>
</comment>
<comment type="pathway">
    <text evidence="2">Secondary metabolite biosynthesis.</text>
</comment>
<comment type="disruption phenotype">
    <text evidence="2">Impairs the production of destruxins (PubMed:22232661).</text>
</comment>
<comment type="similarity">
    <text evidence="4">Belongs to the group II decarboxylase family.</text>
</comment>
<keyword id="KW-0210">Decarboxylase</keyword>
<keyword id="KW-0456">Lyase</keyword>
<keyword id="KW-0663">Pyridoxal phosphate</keyword>
<organism>
    <name type="scientific">Metarhizium robertsii (strain ARSEF 23 / ATCC MYA-3075)</name>
    <name type="common">Metarhizium anisopliae (strain ARSEF 23)</name>
    <dbReference type="NCBI Taxonomy" id="655844"/>
    <lineage>
        <taxon>Eukaryota</taxon>
        <taxon>Fungi</taxon>
        <taxon>Dikarya</taxon>
        <taxon>Ascomycota</taxon>
        <taxon>Pezizomycotina</taxon>
        <taxon>Sordariomycetes</taxon>
        <taxon>Hypocreomycetidae</taxon>
        <taxon>Hypocreales</taxon>
        <taxon>Clavicipitaceae</taxon>
        <taxon>Metarhizium</taxon>
    </lineage>
</organism>
<feature type="chain" id="PRO_0000436439" description="L-aspartate decarboxylase dtxS4">
    <location>
        <begin position="1"/>
        <end position="501"/>
    </location>
</feature>
<feature type="binding site" evidence="1">
    <location>
        <begin position="106"/>
        <end position="108"/>
    </location>
    <ligand>
        <name>substrate</name>
    </ligand>
</feature>
<feature type="binding site" evidence="1">
    <location>
        <position position="474"/>
    </location>
    <ligand>
        <name>substrate</name>
    </ligand>
</feature>
<feature type="modified residue" description="N6-(pyridoxal phosphate)lysine" evidence="1">
    <location>
        <position position="320"/>
    </location>
</feature>
<sequence>MRDTKKMLNRADELDDLYEAVRALIIPHVRAADEACSLKSAGQLHTDDTQRLQNVLVEPYPPKALQERFQFTLPDNEGNGKDGLMHLIRDVLRYSVNTWDQGFMDKLTSSTNPVGVISEIVLGILNTNVHVYHVAPALSVIEKVTGRTLAAYFGFNSPSAGGISCQGGSASNLTSLVVARNSLYPDCKLNGGSSYQFAIFTSCHGHFSMEKAAITCGMGLSSVVHVPVNDDGRMNVSALRELVIQAKAQGKTPLYVNATAGTTVLGVFDPLHEIKTICEEFGMWFHVDASWGGSIIFSAKHRHKLTGCELADSLTISPHKMLNVPMTCSFLLTNNLSSFYTANSLDAGYLFHDTEDDEVWDLANLTLQCGRRADSLKMALAWTYYGAAGFERRINHAFKMAAHLSSIIQKSPDFELVSPNPPPCLQVCFYYTPGGKMAKSEMETSRRTRAMVEKMVDRGFMFDFAPGPKGDFFRVVVNCETLLGTVEGLFKGLEAVGKQVV</sequence>
<reference key="1">
    <citation type="journal article" date="2011" name="PLoS Genet.">
        <title>Genome sequencing and comparative transcriptomics of the model entomopathogenic fungi Metarhizium anisopliae and M. acridum.</title>
        <authorList>
            <person name="Gao Q."/>
            <person name="Jin K."/>
            <person name="Ying S.-H."/>
            <person name="Zhang Y."/>
            <person name="Xiao G."/>
            <person name="Shang Y."/>
            <person name="Duan Z."/>
            <person name="Hu X."/>
            <person name="Xie X.-Q."/>
            <person name="Zhou G."/>
            <person name="Peng G."/>
            <person name="Luo Z."/>
            <person name="Huang W."/>
            <person name="Wang B."/>
            <person name="Fang W."/>
            <person name="Wang S."/>
            <person name="Zhong Y."/>
            <person name="Ma L.-J."/>
            <person name="St Leger R.J."/>
            <person name="Zhao G.-P."/>
            <person name="Pei Y."/>
            <person name="Feng M.-G."/>
            <person name="Xia Y."/>
            <person name="Wang C."/>
        </authorList>
    </citation>
    <scope>NUCLEOTIDE SEQUENCE [LARGE SCALE GENOMIC DNA]</scope>
    <source>
        <strain>ARSEF 23 / ATCC MYA-3075</strain>
    </source>
</reference>
<reference key="2">
    <citation type="journal article" date="2014" name="Proc. Natl. Acad. Sci. U.S.A.">
        <title>Trajectory and genomic determinants of fungal-pathogen speciation and host adaptation.</title>
        <authorList>
            <person name="Hu X."/>
            <person name="Xiao G."/>
            <person name="Zheng P."/>
            <person name="Shang Y."/>
            <person name="Su Y."/>
            <person name="Zhang X."/>
            <person name="Liu X."/>
            <person name="Zhan S."/>
            <person name="St Leger R.J."/>
            <person name="Wang C."/>
        </authorList>
    </citation>
    <scope>GENOME REANNOTATION</scope>
    <source>
        <strain>ARSEF 23 / ATCC MYA-3075</strain>
    </source>
</reference>
<reference key="3">
    <citation type="journal article" date="2012" name="Proc. Natl. Acad. Sci. U.S.A.">
        <title>Unveiling the biosynthetic puzzle of destruxins in Metarhizium species.</title>
        <authorList>
            <person name="Wang B."/>
            <person name="Kang Q."/>
            <person name="Lu Y."/>
            <person name="Bai L."/>
            <person name="Wang C."/>
        </authorList>
    </citation>
    <scope>FUNCTION</scope>
    <scope>DISRUPTION PHENOTYPE</scope>
</reference>
<proteinExistence type="inferred from homology"/>
<gene>
    <name evidence="3" type="primary">dtxS4</name>
    <name type="ORF">MAA_10046</name>
</gene>
<accession>E9FCP7</accession>
<evidence type="ECO:0000250" key="1">
    <source>
        <dbReference type="UniProtKB" id="Q99259"/>
    </source>
</evidence>
<evidence type="ECO:0000269" key="2">
    <source>
    </source>
</evidence>
<evidence type="ECO:0000303" key="3">
    <source>
    </source>
</evidence>
<evidence type="ECO:0000305" key="4"/>
<evidence type="ECO:0000305" key="5">
    <source>
    </source>
</evidence>
<protein>
    <recommendedName>
        <fullName evidence="4">L-aspartate decarboxylase dtxS4</fullName>
        <ecNumber evidence="5">4.1.1.11</ecNumber>
    </recommendedName>
    <alternativeName>
        <fullName evidence="3">Destruxin synthesis protein 4</fullName>
    </alternativeName>
</protein>
<dbReference type="EC" id="4.1.1.11" evidence="5"/>
<dbReference type="EMBL" id="ADNJ02000010">
    <property type="protein sequence ID" value="EFY94503.2"/>
    <property type="molecule type" value="Genomic_DNA"/>
</dbReference>
<dbReference type="RefSeq" id="XP_007826235.2">
    <property type="nucleotide sequence ID" value="XM_007828044.2"/>
</dbReference>
<dbReference type="SMR" id="E9FCP7"/>
<dbReference type="GeneID" id="19264332"/>
<dbReference type="KEGG" id="maj:MAA_10046"/>
<dbReference type="HOGENOM" id="CLU_011856_0_0_1"/>
<dbReference type="OrthoDB" id="392571at2759"/>
<dbReference type="Proteomes" id="UP000002498">
    <property type="component" value="Unassembled WGS sequence"/>
</dbReference>
<dbReference type="GO" id="GO:0005737">
    <property type="term" value="C:cytoplasm"/>
    <property type="evidence" value="ECO:0007669"/>
    <property type="project" value="TreeGrafter"/>
</dbReference>
<dbReference type="GO" id="GO:0004068">
    <property type="term" value="F:aspartate 1-decarboxylase activity"/>
    <property type="evidence" value="ECO:0007669"/>
    <property type="project" value="UniProtKB-EC"/>
</dbReference>
<dbReference type="GO" id="GO:0030170">
    <property type="term" value="F:pyridoxal phosphate binding"/>
    <property type="evidence" value="ECO:0007669"/>
    <property type="project" value="InterPro"/>
</dbReference>
<dbReference type="GO" id="GO:0019752">
    <property type="term" value="P:carboxylic acid metabolic process"/>
    <property type="evidence" value="ECO:0007669"/>
    <property type="project" value="InterPro"/>
</dbReference>
<dbReference type="Gene3D" id="3.90.1150.170">
    <property type="match status" value="1"/>
</dbReference>
<dbReference type="Gene3D" id="3.40.640.10">
    <property type="entry name" value="Type I PLP-dependent aspartate aminotransferase-like (Major domain)"/>
    <property type="match status" value="1"/>
</dbReference>
<dbReference type="InterPro" id="IPR002129">
    <property type="entry name" value="PyrdxlP-dep_de-COase"/>
</dbReference>
<dbReference type="InterPro" id="IPR015424">
    <property type="entry name" value="PyrdxlP-dep_Trfase"/>
</dbReference>
<dbReference type="InterPro" id="IPR015421">
    <property type="entry name" value="PyrdxlP-dep_Trfase_major"/>
</dbReference>
<dbReference type="PANTHER" id="PTHR45677:SF8">
    <property type="entry name" value="CYSTEINE SULFINIC ACID DECARBOXYLASE"/>
    <property type="match status" value="1"/>
</dbReference>
<dbReference type="PANTHER" id="PTHR45677">
    <property type="entry name" value="GLUTAMATE DECARBOXYLASE-RELATED"/>
    <property type="match status" value="1"/>
</dbReference>
<dbReference type="Pfam" id="PF00282">
    <property type="entry name" value="Pyridoxal_deC"/>
    <property type="match status" value="1"/>
</dbReference>
<dbReference type="SUPFAM" id="SSF53383">
    <property type="entry name" value="PLP-dependent transferases"/>
    <property type="match status" value="1"/>
</dbReference>